<evidence type="ECO:0000255" key="1">
    <source>
        <dbReference type="HAMAP-Rule" id="MF_01582"/>
    </source>
</evidence>
<protein>
    <recommendedName>
        <fullName evidence="1">Serine/threonine transporter SstT</fullName>
    </recommendedName>
    <alternativeName>
        <fullName evidence="1">Na(+)/serine-threonine symporter</fullName>
    </alternativeName>
</protein>
<organism>
    <name type="scientific">Pseudomonas fluorescens (strain ATCC BAA-477 / NRRL B-23932 / Pf-5)</name>
    <dbReference type="NCBI Taxonomy" id="220664"/>
    <lineage>
        <taxon>Bacteria</taxon>
        <taxon>Pseudomonadati</taxon>
        <taxon>Pseudomonadota</taxon>
        <taxon>Gammaproteobacteria</taxon>
        <taxon>Pseudomonadales</taxon>
        <taxon>Pseudomonadaceae</taxon>
        <taxon>Pseudomonas</taxon>
    </lineage>
</organism>
<accession>Q4K9I6</accession>
<gene>
    <name evidence="1" type="primary">sstT</name>
    <name type="ordered locus">PFL_4000</name>
</gene>
<dbReference type="EMBL" id="CP000076">
    <property type="protein sequence ID" value="AAY93261.2"/>
    <property type="molecule type" value="Genomic_DNA"/>
</dbReference>
<dbReference type="RefSeq" id="WP_011062284.1">
    <property type="nucleotide sequence ID" value="NC_004129.6"/>
</dbReference>
<dbReference type="SMR" id="Q4K9I6"/>
<dbReference type="STRING" id="220664.PFL_4000"/>
<dbReference type="KEGG" id="pfl:PFL_4000"/>
<dbReference type="PATRIC" id="fig|220664.5.peg.4095"/>
<dbReference type="eggNOG" id="COG3633">
    <property type="taxonomic scope" value="Bacteria"/>
</dbReference>
<dbReference type="HOGENOM" id="CLU_044581_0_0_6"/>
<dbReference type="Proteomes" id="UP000008540">
    <property type="component" value="Chromosome"/>
</dbReference>
<dbReference type="GO" id="GO:0005886">
    <property type="term" value="C:plasma membrane"/>
    <property type="evidence" value="ECO:0007669"/>
    <property type="project" value="UniProtKB-SubCell"/>
</dbReference>
<dbReference type="GO" id="GO:0005295">
    <property type="term" value="F:neutral L-amino acid:sodium symporter activity"/>
    <property type="evidence" value="ECO:0007669"/>
    <property type="project" value="TreeGrafter"/>
</dbReference>
<dbReference type="GO" id="GO:0032329">
    <property type="term" value="P:serine transport"/>
    <property type="evidence" value="ECO:0007669"/>
    <property type="project" value="InterPro"/>
</dbReference>
<dbReference type="GO" id="GO:0015826">
    <property type="term" value="P:threonine transport"/>
    <property type="evidence" value="ECO:0007669"/>
    <property type="project" value="InterPro"/>
</dbReference>
<dbReference type="FunFam" id="1.10.3860.10:FF:000003">
    <property type="entry name" value="Serine/threonine transporter sstT"/>
    <property type="match status" value="1"/>
</dbReference>
<dbReference type="Gene3D" id="1.10.3860.10">
    <property type="entry name" value="Sodium:dicarboxylate symporter"/>
    <property type="match status" value="1"/>
</dbReference>
<dbReference type="HAMAP" id="MF_01582">
    <property type="entry name" value="Ser_Thr_transp_SstT"/>
    <property type="match status" value="1"/>
</dbReference>
<dbReference type="InterPro" id="IPR001991">
    <property type="entry name" value="Na-dicarboxylate_symporter"/>
</dbReference>
<dbReference type="InterPro" id="IPR036458">
    <property type="entry name" value="Na:dicarbo_symporter_sf"/>
</dbReference>
<dbReference type="InterPro" id="IPR023025">
    <property type="entry name" value="Ser_Thr_transp_SstT"/>
</dbReference>
<dbReference type="NCBIfam" id="NF010151">
    <property type="entry name" value="PRK13628.1"/>
    <property type="match status" value="1"/>
</dbReference>
<dbReference type="PANTHER" id="PTHR42865">
    <property type="entry name" value="PROTON/GLUTAMATE-ASPARTATE SYMPORTER"/>
    <property type="match status" value="1"/>
</dbReference>
<dbReference type="PANTHER" id="PTHR42865:SF8">
    <property type="entry name" value="SERINE_THREONINE TRANSPORTER SSTT"/>
    <property type="match status" value="1"/>
</dbReference>
<dbReference type="Pfam" id="PF00375">
    <property type="entry name" value="SDF"/>
    <property type="match status" value="1"/>
</dbReference>
<dbReference type="PRINTS" id="PR00173">
    <property type="entry name" value="EDTRNSPORT"/>
</dbReference>
<dbReference type="SUPFAM" id="SSF118215">
    <property type="entry name" value="Proton glutamate symport protein"/>
    <property type="match status" value="1"/>
</dbReference>
<proteinExistence type="inferred from homology"/>
<feature type="chain" id="PRO_0000309109" description="Serine/threonine transporter SstT">
    <location>
        <begin position="1"/>
        <end position="409"/>
    </location>
</feature>
<feature type="transmembrane region" description="Helical" evidence="1">
    <location>
        <begin position="15"/>
        <end position="35"/>
    </location>
</feature>
<feature type="transmembrane region" description="Helical" evidence="1">
    <location>
        <begin position="49"/>
        <end position="69"/>
    </location>
</feature>
<feature type="transmembrane region" description="Helical" evidence="1">
    <location>
        <begin position="82"/>
        <end position="102"/>
    </location>
</feature>
<feature type="transmembrane region" description="Helical" evidence="1">
    <location>
        <begin position="142"/>
        <end position="162"/>
    </location>
</feature>
<feature type="transmembrane region" description="Helical" evidence="1">
    <location>
        <begin position="193"/>
        <end position="213"/>
    </location>
</feature>
<feature type="transmembrane region" description="Helical" evidence="1">
    <location>
        <begin position="218"/>
        <end position="238"/>
    </location>
</feature>
<feature type="transmembrane region" description="Helical" evidence="1">
    <location>
        <begin position="301"/>
        <end position="321"/>
    </location>
</feature>
<feature type="transmembrane region" description="Helical" evidence="1">
    <location>
        <begin position="331"/>
        <end position="351"/>
    </location>
</feature>
<feature type="transmembrane region" description="Helical" evidence="1">
    <location>
        <begin position="357"/>
        <end position="377"/>
    </location>
</feature>
<keyword id="KW-0029">Amino-acid transport</keyword>
<keyword id="KW-0997">Cell inner membrane</keyword>
<keyword id="KW-1003">Cell membrane</keyword>
<keyword id="KW-0472">Membrane</keyword>
<keyword id="KW-0769">Symport</keyword>
<keyword id="KW-0812">Transmembrane</keyword>
<keyword id="KW-1133">Transmembrane helix</keyword>
<keyword id="KW-0813">Transport</keyword>
<reference key="1">
    <citation type="journal article" date="2005" name="Nat. Biotechnol.">
        <title>Complete genome sequence of the plant commensal Pseudomonas fluorescens Pf-5.</title>
        <authorList>
            <person name="Paulsen I.T."/>
            <person name="Press C.M."/>
            <person name="Ravel J."/>
            <person name="Kobayashi D.Y."/>
            <person name="Myers G.S.A."/>
            <person name="Mavrodi D.V."/>
            <person name="DeBoy R.T."/>
            <person name="Seshadri R."/>
            <person name="Ren Q."/>
            <person name="Madupu R."/>
            <person name="Dodson R.J."/>
            <person name="Durkin A.S."/>
            <person name="Brinkac L.M."/>
            <person name="Daugherty S.C."/>
            <person name="Sullivan S.A."/>
            <person name="Rosovitz M.J."/>
            <person name="Gwinn M.L."/>
            <person name="Zhou L."/>
            <person name="Schneider D.J."/>
            <person name="Cartinhour S.W."/>
            <person name="Nelson W.C."/>
            <person name="Weidman J."/>
            <person name="Watkins K."/>
            <person name="Tran K."/>
            <person name="Khouri H."/>
            <person name="Pierson E.A."/>
            <person name="Pierson L.S. III"/>
            <person name="Thomashow L.S."/>
            <person name="Loper J.E."/>
        </authorList>
    </citation>
    <scope>NUCLEOTIDE SEQUENCE [LARGE SCALE GENOMIC DNA]</scope>
    <source>
        <strain>ATCC BAA-477 / NRRL B-23932 / Pf-5</strain>
    </source>
</reference>
<sequence length="409" mass="42211">MSASPPSFLHSLKRLSLVTQIVIGLIAGIALALLAPEVAKSTTFIGKVFVSALKAVAPILVFVLVMASIANHKHGQETHIRPILVLYLLGTFAAAVVAVIASSLFPSALVLSTHDVAISAPGGITEVLQSLLLSVVDNPVSALMNANFIGILAWAIGMGVAIRHAGETTRTVLDDLSNGVTVIVRVVIRFAPLGIFGLVASTLATSGFNALLGYLHLLAVLIGCMLFVALVMNPLIVFWKIRRNPFPLVLTCLRESGITAFFTRSSAANIPVNLELSKRLGLHEDTYSVSIPLGATINMAGAAITITVLTLAAVHTLGIAVDLPTAVLLSVVAAICACGASGVAGGSLLLIPLACSLFGIPSEIAMQVVAVGFIIGVLQDSAETALNSSTDVLFTAAACMAQEDKAQAA</sequence>
<comment type="function">
    <text evidence="1">Involved in the import of serine and threonine into the cell, with the concomitant import of sodium (symport system).</text>
</comment>
<comment type="catalytic activity">
    <reaction evidence="1">
        <text>L-serine(in) + Na(+)(in) = L-serine(out) + Na(+)(out)</text>
        <dbReference type="Rhea" id="RHEA:29575"/>
        <dbReference type="ChEBI" id="CHEBI:29101"/>
        <dbReference type="ChEBI" id="CHEBI:33384"/>
    </reaction>
    <physiologicalReaction direction="right-to-left" evidence="1">
        <dbReference type="Rhea" id="RHEA:29577"/>
    </physiologicalReaction>
</comment>
<comment type="catalytic activity">
    <reaction evidence="1">
        <text>L-threonine(in) + Na(+)(in) = L-threonine(out) + Na(+)(out)</text>
        <dbReference type="Rhea" id="RHEA:69999"/>
        <dbReference type="ChEBI" id="CHEBI:29101"/>
        <dbReference type="ChEBI" id="CHEBI:57926"/>
    </reaction>
    <physiologicalReaction direction="right-to-left" evidence="1">
        <dbReference type="Rhea" id="RHEA:70001"/>
    </physiologicalReaction>
</comment>
<comment type="subcellular location">
    <subcellularLocation>
        <location evidence="1">Cell inner membrane</location>
        <topology evidence="1">Multi-pass membrane protein</topology>
    </subcellularLocation>
</comment>
<comment type="similarity">
    <text evidence="1">Belongs to the dicarboxylate/amino acid:cation symporter (DAACS) (TC 2.A.23) family.</text>
</comment>
<name>SSTT_PSEF5</name>